<sequence length="9" mass="1279">FKCMSEWYW</sequence>
<comment type="function">
    <text evidence="1">Potently induces platelet aggregation of washed human platelet and platelet-rich plasma in a concentration-dependent manner. It acts by binding to GPVI (GP6), leading to kinases-dependent exposure of functional alpha-IIb/beta-3 and platelet aggregation, and also induces metalloproteinase-dependent GP6 shedding from platelets.</text>
</comment>
<comment type="subunit">
    <text evidence="1">Hexamer of heterodimers of subunits alpha and beta (alphabeta)(6); disulfide-linked.</text>
</comment>
<comment type="subcellular location">
    <subcellularLocation>
        <location>Secreted</location>
    </subcellularLocation>
</comment>
<comment type="tissue specificity">
    <text>Expressed by the venom gland.</text>
</comment>
<comment type="mass spectrometry" mass="16700.0" method="MALDI" evidence="1"/>
<comment type="miscellaneous">
    <text evidence="3">Negative results: does not bind to GPIb and alpha-2 integrin. Does not agglutinate the formalin-fixed platelets, even at high concentrations (PubMed:18221359).</text>
</comment>
<comment type="similarity">
    <text evidence="2">Belongs to the snaclec family.</text>
</comment>
<dbReference type="GO" id="GO:0005576">
    <property type="term" value="C:extracellular region"/>
    <property type="evidence" value="ECO:0007669"/>
    <property type="project" value="UniProtKB-SubCell"/>
</dbReference>
<dbReference type="GO" id="GO:0090729">
    <property type="term" value="F:toxin activity"/>
    <property type="evidence" value="ECO:0007669"/>
    <property type="project" value="UniProtKB-KW"/>
</dbReference>
<organism>
    <name type="scientific">Tropidolaemus wagleri</name>
    <name type="common">Wagler's pit viper</name>
    <name type="synonym">Trimeresurus wagleri</name>
    <dbReference type="NCBI Taxonomy" id="8770"/>
    <lineage>
        <taxon>Eukaryota</taxon>
        <taxon>Metazoa</taxon>
        <taxon>Chordata</taxon>
        <taxon>Craniata</taxon>
        <taxon>Vertebrata</taxon>
        <taxon>Euteleostomi</taxon>
        <taxon>Lepidosauria</taxon>
        <taxon>Squamata</taxon>
        <taxon>Bifurcata</taxon>
        <taxon>Unidentata</taxon>
        <taxon>Episquamata</taxon>
        <taxon>Toxicofera</taxon>
        <taxon>Serpentes</taxon>
        <taxon>Colubroidea</taxon>
        <taxon>Viperidae</taxon>
        <taxon>Crotalinae</taxon>
        <taxon>Tropidolaemus</taxon>
    </lineage>
</organism>
<proteinExistence type="evidence at protein level"/>
<keyword id="KW-0903">Direct protein sequencing</keyword>
<keyword id="KW-1015">Disulfide bond</keyword>
<keyword id="KW-1199">Hemostasis impairing toxin</keyword>
<keyword id="KW-1202">Platelet aggregation activating toxin</keyword>
<keyword id="KW-0964">Secreted</keyword>
<keyword id="KW-0800">Toxin</keyword>
<evidence type="ECO:0000269" key="1">
    <source>
    </source>
</evidence>
<evidence type="ECO:0000305" key="2"/>
<evidence type="ECO:0000305" key="3">
    <source>
    </source>
</evidence>
<protein>
    <recommendedName>
        <fullName>Snaclec trowaglerix subunit alpha</fullName>
    </recommendedName>
</protein>
<name>SLA_TROWA</name>
<feature type="chain" id="PRO_0000430180" description="Snaclec trowaglerix subunit alpha">
    <location>
        <begin position="1"/>
        <end position="9" status="greater than"/>
    </location>
</feature>
<feature type="disulfide bond">
    <location>
        <begin position="3"/>
        <end status="unknown"/>
    </location>
</feature>
<feature type="non-terminal residue">
    <location>
        <position position="9"/>
    </location>
</feature>
<reference key="1">
    <citation type="journal article" date="2008" name="J. Thromb. Haemost.">
        <title>The highly specific platelet glycoprotein (GP) VI agonist trowaglerix impaired collagen-induced platelet aggregation ex vivo through matrix metalloproteinase-dependent GPVI shedding.</title>
        <authorList>
            <person name="Chang C.H."/>
            <person name="Chung C.H."/>
            <person name="Kuo H.L."/>
            <person name="Hsu C.C."/>
            <person name="Huang T.F."/>
        </authorList>
    </citation>
    <scope>PROTEIN SEQUENCE</scope>
    <scope>FUNCTION</scope>
    <scope>SUBUNIT</scope>
    <scope>MASS SPECTROMETRY</scope>
    <source>
        <tissue>Venom</tissue>
    </source>
</reference>
<accession>P0DMM6</accession>